<evidence type="ECO:0000250" key="1">
    <source>
        <dbReference type="UniProtKB" id="O57286"/>
    </source>
</evidence>
<evidence type="ECO:0000250" key="2">
    <source>
        <dbReference type="UniProtKB" id="P06159"/>
    </source>
</evidence>
<evidence type="ECO:0000250" key="3">
    <source>
        <dbReference type="UniProtKB" id="P10050"/>
    </source>
</evidence>
<evidence type="ECO:0000250" key="4">
    <source>
        <dbReference type="UniProtKB" id="Q07097"/>
    </source>
</evidence>
<evidence type="ECO:0000250" key="5">
    <source>
        <dbReference type="UniProtKB" id="Q77M43"/>
    </source>
</evidence>
<evidence type="ECO:0000250" key="6">
    <source>
        <dbReference type="UniProtKB" id="Q89933"/>
    </source>
</evidence>
<evidence type="ECO:0000250" key="7">
    <source>
        <dbReference type="UniProtKB" id="Q9WMB5"/>
    </source>
</evidence>
<evidence type="ECO:0000256" key="8">
    <source>
        <dbReference type="SAM" id="MobiDB-lite"/>
    </source>
</evidence>
<evidence type="ECO:0000305" key="9"/>
<protein>
    <recommendedName>
        <fullName>Nucleoprotein</fullName>
    </recommendedName>
    <alternativeName>
        <fullName>Nucleocapsid protein</fullName>
        <shortName>NP</shortName>
        <shortName>Protein N</shortName>
    </alternativeName>
</protein>
<dbReference type="SMR" id="P37708"/>
<dbReference type="GO" id="GO:0019029">
    <property type="term" value="C:helical viral capsid"/>
    <property type="evidence" value="ECO:0007669"/>
    <property type="project" value="UniProtKB-KW"/>
</dbReference>
<dbReference type="GO" id="GO:0030430">
    <property type="term" value="C:host cell cytoplasm"/>
    <property type="evidence" value="ECO:0007669"/>
    <property type="project" value="UniProtKB-SubCell"/>
</dbReference>
<dbReference type="GO" id="GO:1990904">
    <property type="term" value="C:ribonucleoprotein complex"/>
    <property type="evidence" value="ECO:0007669"/>
    <property type="project" value="UniProtKB-KW"/>
</dbReference>
<dbReference type="GO" id="GO:0019013">
    <property type="term" value="C:viral nucleocapsid"/>
    <property type="evidence" value="ECO:0007669"/>
    <property type="project" value="UniProtKB-KW"/>
</dbReference>
<dbReference type="GO" id="GO:0003723">
    <property type="term" value="F:RNA binding"/>
    <property type="evidence" value="ECO:0007669"/>
    <property type="project" value="UniProtKB-KW"/>
</dbReference>
<dbReference type="GO" id="GO:0005198">
    <property type="term" value="F:structural molecule activity"/>
    <property type="evidence" value="ECO:0007669"/>
    <property type="project" value="InterPro"/>
</dbReference>
<dbReference type="InterPro" id="IPR002021">
    <property type="entry name" value="Paramyx_ncap"/>
</dbReference>
<dbReference type="Pfam" id="PF00973">
    <property type="entry name" value="Paramyxo_ncap"/>
    <property type="match status" value="1"/>
</dbReference>
<sequence length="525" mass="58132">MASLLKSLALFKKNKDKPPLAAGSGGAIRGIKHVIIVPIPGDSSITTRSRLLDCLVKMVGDPDISGPKLTGALISILSLFVESPGQLIQRITDDPDISIKLVEVIQSDKTQSGLTFASRGASMDDEADRYFTYDEPNGGEERQSYWFENREIQDIEVQDPEGFNMILATILAQIWILLAKAVTTPDTAADSELRRWVKYTQQRRVIGEFRLDKGWLDTVRNRIAEDLSLRRFMVALILDIKRTPGNKPRIAEMICDIDTYIVEAGLASFILTIKFGIETMYPALGLHEFAGELSTIESLMNLYQQMGELAPYMVILENSIQNKFSAGAYPLLWSYAMGVGVELESSMGGLNFGRSYFDPAYFRLGQEMVRRSAGKVSSNLASELGITEEEAKLVSEIAAYTGDDRNSRTSGPKQTQVSFLRTDQGGEIQHNASKKDEARVLQVRKETWASSRSDRYKEDTDNEAVSPSVKTLIDVDTTPEADTDPLGNKKSAEALLKLQAMASILEDPTLGNDSPRTYNDKDLLS</sequence>
<gene>
    <name type="primary">N</name>
    <name type="synonym">NP</name>
</gene>
<comment type="function">
    <text evidence="2 5">Forms the helical nucleocapsid (NC) in a ratio of 1 N per 6 ribonucleotides, protecting the genome from nucleases. The nucleocapsid (NC) has a helical structure with either 12.35 or 11.64 N per turn, approximately 20 nm in diameter, with a hollow central cavity approximately 5 nm in diameter (By similarity). The encapsidated genomic RNA serves as template for transcription and replication; encapsidation by N is coupled to RNA synthesis. Forms the encapsidation complex with the phosphoprotein protein P. Before encapsidation, the newly synthesized free N protein, so-called N0, is chaperoned by P (By similarity). Participates, together with P, in the formation of viral factories (viroplasms), which are large inclusions in the host cytoplasm where replication takes place (By similarity).</text>
</comment>
<comment type="subunit">
    <text evidence="1 2 4 5">Homomultimer; forms the nucleocapsid (By similarity). Binds to viral genomic RNA (By similarity). N0 interacts (via Ncore) with the phosphoprotein (via N-terminus); this interaction allows P to chaperon N0 to avoid N polymerization before encapsidation (By similarity). Interacts as N-RNA template with the phosphoprotein (via C-terminus); this interaction positions the polymerase on the template (By similarity). Interacts with the phosphoprotein; this interaction leads to the formation of membraneless organelles that function as viral replication factories (By similarity).</text>
</comment>
<comment type="subcellular location">
    <subcellularLocation>
        <location evidence="7">Virion</location>
    </subcellularLocation>
    <subcellularLocation>
        <location evidence="7">Host cytoplasm</location>
    </subcellularLocation>
</comment>
<comment type="domain">
    <text evidence="5">Ncore is globular and carries regions required for N self-assembly and RNA-binding. Ntail is an intrinsically disordered monomeric domain in the C-terminus.</text>
</comment>
<comment type="similarity">
    <text evidence="9">Belongs to the paramyxoviruses nucleocapsid family.</text>
</comment>
<keyword id="KW-0167">Capsid protein</keyword>
<keyword id="KW-1139">Helical capsid protein</keyword>
<keyword id="KW-1035">Host cytoplasm</keyword>
<keyword id="KW-0687">Ribonucleoprotein</keyword>
<keyword id="KW-0694">RNA-binding</keyword>
<keyword id="KW-0543">Viral nucleoprotein</keyword>
<keyword id="KW-0946">Virion</keyword>
<proteinExistence type="evidence at transcript level"/>
<name>NCAP_RINDL</name>
<organism>
    <name type="scientific">Rinderpest virus (strain L)</name>
    <name type="common">RDV</name>
    <dbReference type="NCBI Taxonomy" id="11243"/>
    <lineage>
        <taxon>Viruses</taxon>
        <taxon>Riboviria</taxon>
        <taxon>Orthornavirae</taxon>
        <taxon>Negarnaviricota</taxon>
        <taxon>Haploviricotina</taxon>
        <taxon>Monjiviricetes</taxon>
        <taxon>Mononegavirales</taxon>
        <taxon>Paramyxoviridae</taxon>
        <taxon>Orthoparamyxovirinae</taxon>
        <taxon>Morbillivirus</taxon>
        <taxon>Morbillivirus pecoris</taxon>
        <taxon>Rinderpest morbillivirus</taxon>
    </lineage>
</organism>
<reference key="1">
    <citation type="journal article" date="1991" name="Virus Genes">
        <title>Nucleotide sequence of cDNA to the rinderpest virus mRNA encoding the nucleocapsid protein.</title>
        <authorList>
            <person name="Kamata H."/>
            <person name="Tsukiyama K."/>
            <person name="Sugiyama M."/>
            <person name="Kamata Y."/>
            <person name="Yoshikawa Y."/>
            <person name="Yamanouchi K."/>
        </authorList>
    </citation>
    <scope>NUCLEOTIDE SEQUENCE [MRNA]</scope>
</reference>
<accession>P37708</accession>
<feature type="chain" id="PRO_0000142676" description="Nucleoprotein">
    <location>
        <begin position="1"/>
        <end position="525"/>
    </location>
</feature>
<feature type="region of interest" description="Ncore" evidence="2">
    <location>
        <begin position="1"/>
        <end position="403"/>
    </location>
</feature>
<feature type="region of interest" description="RNA packaging and organization of the helical nucleocapsid" evidence="6">
    <location>
        <begin position="1"/>
        <end position="375"/>
    </location>
</feature>
<feature type="region of interest" description="Homomultimerization" evidence="3">
    <location>
        <begin position="1"/>
        <end position="36"/>
    </location>
</feature>
<feature type="region of interest" description="Homomultimerization" evidence="3">
    <location>
        <begin position="373"/>
        <end position="391"/>
    </location>
</feature>
<feature type="region of interest" description="Ntail" evidence="2">
    <location>
        <begin position="404"/>
        <end position="525"/>
    </location>
</feature>
<feature type="region of interest" description="Disordered" evidence="8">
    <location>
        <begin position="449"/>
        <end position="489"/>
    </location>
</feature>
<feature type="region of interest" description="Interaction with the phosphoprotein" evidence="5">
    <location>
        <begin position="477"/>
        <end position="505"/>
    </location>
</feature>
<feature type="region of interest" description="Disordered" evidence="8">
    <location>
        <begin position="504"/>
        <end position="525"/>
    </location>
</feature>
<feature type="compositionally biased region" description="Basic and acidic residues" evidence="8">
    <location>
        <begin position="449"/>
        <end position="459"/>
    </location>
</feature>
<feature type="binding site" evidence="5">
    <location>
        <position position="180"/>
    </location>
    <ligand>
        <name>RNA</name>
        <dbReference type="ChEBI" id="CHEBI:33697"/>
    </ligand>
</feature>
<feature type="binding site" evidence="5">
    <location>
        <position position="195"/>
    </location>
    <ligand>
        <name>RNA</name>
        <dbReference type="ChEBI" id="CHEBI:33697"/>
    </ligand>
</feature>
<feature type="binding site" evidence="5">
    <location>
        <position position="202"/>
    </location>
    <ligand>
        <name>RNA</name>
        <dbReference type="ChEBI" id="CHEBI:33697"/>
    </ligand>
</feature>
<feature type="binding site" evidence="5">
    <location>
        <position position="260"/>
    </location>
    <ligand>
        <name>RNA</name>
        <dbReference type="ChEBI" id="CHEBI:33697"/>
    </ligand>
</feature>
<feature type="binding site" evidence="5">
    <location>
        <position position="351"/>
    </location>
    <ligand>
        <name>RNA</name>
        <dbReference type="ChEBI" id="CHEBI:33697"/>
    </ligand>
</feature>
<organismHost>
    <name type="scientific">Bos indicus</name>
    <name type="common">Zebu</name>
    <dbReference type="NCBI Taxonomy" id="9915"/>
</organismHost>
<organismHost>
    <name type="scientific">Bos taurus</name>
    <name type="common">Bovine</name>
    <dbReference type="NCBI Taxonomy" id="9913"/>
</organismHost>
<organismHost>
    <name type="scientific">Bubalus bubalis</name>
    <name type="common">Domestic water buffalo</name>
    <dbReference type="NCBI Taxonomy" id="89462"/>
</organismHost>
<organismHost>
    <name type="scientific">Capra hircus</name>
    <name type="common">Goat</name>
    <dbReference type="NCBI Taxonomy" id="9925"/>
</organismHost>
<organismHost>
    <name type="scientific">Gazella</name>
    <name type="common">gazelles</name>
    <dbReference type="NCBI Taxonomy" id="9933"/>
</organismHost>
<organismHost>
    <name type="scientific">Giraffa camelopardalis</name>
    <name type="common">Giraffe</name>
    <dbReference type="NCBI Taxonomy" id="9894"/>
</organismHost>
<organismHost>
    <name type="scientific">Hippopotamus</name>
    <dbReference type="NCBI Taxonomy" id="9832"/>
</organismHost>
<organismHost>
    <name type="scientific">Ovis aries</name>
    <name type="common">Sheep</name>
    <dbReference type="NCBI Taxonomy" id="9940"/>
</organismHost>
<organismHost>
    <name type="scientific">Suidae</name>
    <name type="common">pigs</name>
    <dbReference type="NCBI Taxonomy" id="9821"/>
</organismHost>